<gene>
    <name evidence="1" type="primary">rpsR</name>
    <name type="ordered locus">Tlet_0828</name>
</gene>
<keyword id="KW-1185">Reference proteome</keyword>
<keyword id="KW-0687">Ribonucleoprotein</keyword>
<keyword id="KW-0689">Ribosomal protein</keyword>
<keyword id="KW-0694">RNA-binding</keyword>
<keyword id="KW-0699">rRNA-binding</keyword>
<reference key="1">
    <citation type="submission" date="2007-08" db="EMBL/GenBank/DDBJ databases">
        <title>Complete sequence of Thermotoga lettingae TMO.</title>
        <authorList>
            <consortium name="US DOE Joint Genome Institute"/>
            <person name="Copeland A."/>
            <person name="Lucas S."/>
            <person name="Lapidus A."/>
            <person name="Barry K."/>
            <person name="Glavina del Rio T."/>
            <person name="Dalin E."/>
            <person name="Tice H."/>
            <person name="Pitluck S."/>
            <person name="Foster B."/>
            <person name="Bruce D."/>
            <person name="Schmutz J."/>
            <person name="Larimer F."/>
            <person name="Land M."/>
            <person name="Hauser L."/>
            <person name="Kyrpides N."/>
            <person name="Mikhailova N."/>
            <person name="Nelson K."/>
            <person name="Gogarten J.P."/>
            <person name="Noll K."/>
            <person name="Richardson P."/>
        </authorList>
    </citation>
    <scope>NUCLEOTIDE SEQUENCE [LARGE SCALE GENOMIC DNA]</scope>
    <source>
        <strain>ATCC BAA-301 / DSM 14385 / NBRC 107922 / TMO</strain>
    </source>
</reference>
<protein>
    <recommendedName>
        <fullName evidence="1">Small ribosomal subunit protein bS18</fullName>
    </recommendedName>
    <alternativeName>
        <fullName evidence="2">30S ribosomal protein S18</fullName>
    </alternativeName>
</protein>
<organism>
    <name type="scientific">Pseudothermotoga lettingae (strain ATCC BAA-301 / DSM 14385 / NBRC 107922 / TMO)</name>
    <name type="common">Thermotoga lettingae</name>
    <dbReference type="NCBI Taxonomy" id="416591"/>
    <lineage>
        <taxon>Bacteria</taxon>
        <taxon>Thermotogati</taxon>
        <taxon>Thermotogota</taxon>
        <taxon>Thermotogae</taxon>
        <taxon>Thermotogales</taxon>
        <taxon>Thermotogaceae</taxon>
        <taxon>Pseudothermotoga</taxon>
    </lineage>
</organism>
<dbReference type="EMBL" id="CP000812">
    <property type="protein sequence ID" value="ABV33394.1"/>
    <property type="molecule type" value="Genomic_DNA"/>
</dbReference>
<dbReference type="RefSeq" id="WP_012002875.1">
    <property type="nucleotide sequence ID" value="NZ_BSDV01000001.1"/>
</dbReference>
<dbReference type="SMR" id="A8F5G0"/>
<dbReference type="STRING" id="416591.Tlet_0828"/>
<dbReference type="KEGG" id="tle:Tlet_0828"/>
<dbReference type="eggNOG" id="COG0238">
    <property type="taxonomic scope" value="Bacteria"/>
</dbReference>
<dbReference type="HOGENOM" id="CLU_148710_2_0_0"/>
<dbReference type="OrthoDB" id="9812008at2"/>
<dbReference type="Proteomes" id="UP000002016">
    <property type="component" value="Chromosome"/>
</dbReference>
<dbReference type="GO" id="GO:0022627">
    <property type="term" value="C:cytosolic small ribosomal subunit"/>
    <property type="evidence" value="ECO:0007669"/>
    <property type="project" value="TreeGrafter"/>
</dbReference>
<dbReference type="GO" id="GO:0070181">
    <property type="term" value="F:small ribosomal subunit rRNA binding"/>
    <property type="evidence" value="ECO:0007669"/>
    <property type="project" value="TreeGrafter"/>
</dbReference>
<dbReference type="GO" id="GO:0003735">
    <property type="term" value="F:structural constituent of ribosome"/>
    <property type="evidence" value="ECO:0007669"/>
    <property type="project" value="InterPro"/>
</dbReference>
<dbReference type="GO" id="GO:0006412">
    <property type="term" value="P:translation"/>
    <property type="evidence" value="ECO:0007669"/>
    <property type="project" value="UniProtKB-UniRule"/>
</dbReference>
<dbReference type="Gene3D" id="4.10.640.10">
    <property type="entry name" value="Ribosomal protein S18"/>
    <property type="match status" value="1"/>
</dbReference>
<dbReference type="HAMAP" id="MF_00270">
    <property type="entry name" value="Ribosomal_bS18"/>
    <property type="match status" value="1"/>
</dbReference>
<dbReference type="InterPro" id="IPR001648">
    <property type="entry name" value="Ribosomal_bS18"/>
</dbReference>
<dbReference type="InterPro" id="IPR018275">
    <property type="entry name" value="Ribosomal_bS18_CS"/>
</dbReference>
<dbReference type="InterPro" id="IPR036870">
    <property type="entry name" value="Ribosomal_bS18_sf"/>
</dbReference>
<dbReference type="NCBIfam" id="TIGR00165">
    <property type="entry name" value="S18"/>
    <property type="match status" value="1"/>
</dbReference>
<dbReference type="PANTHER" id="PTHR13479">
    <property type="entry name" value="30S RIBOSOMAL PROTEIN S18"/>
    <property type="match status" value="1"/>
</dbReference>
<dbReference type="PANTHER" id="PTHR13479:SF40">
    <property type="entry name" value="SMALL RIBOSOMAL SUBUNIT PROTEIN BS18M"/>
    <property type="match status" value="1"/>
</dbReference>
<dbReference type="Pfam" id="PF01084">
    <property type="entry name" value="Ribosomal_S18"/>
    <property type="match status" value="1"/>
</dbReference>
<dbReference type="PRINTS" id="PR00974">
    <property type="entry name" value="RIBOSOMALS18"/>
</dbReference>
<dbReference type="SUPFAM" id="SSF46911">
    <property type="entry name" value="Ribosomal protein S18"/>
    <property type="match status" value="1"/>
</dbReference>
<dbReference type="PROSITE" id="PS00057">
    <property type="entry name" value="RIBOSOMAL_S18"/>
    <property type="match status" value="1"/>
</dbReference>
<evidence type="ECO:0000255" key="1">
    <source>
        <dbReference type="HAMAP-Rule" id="MF_00270"/>
    </source>
</evidence>
<evidence type="ECO:0000305" key="2"/>
<name>RS18_PSELT</name>
<accession>A8F5G0</accession>
<feature type="chain" id="PRO_0000345556" description="Small ribosomal subunit protein bS18">
    <location>
        <begin position="1"/>
        <end position="78"/>
    </location>
</feature>
<comment type="function">
    <text evidence="1">Binds as a heterodimer with protein bS6 to the central domain of the 16S rRNA, where it helps stabilize the platform of the 30S subunit.</text>
</comment>
<comment type="subunit">
    <text evidence="1">Part of the 30S ribosomal subunit. Forms a tight heterodimer with protein bS6.</text>
</comment>
<comment type="similarity">
    <text evidence="1">Belongs to the bacterial ribosomal protein bS18 family.</text>
</comment>
<sequence length="78" mass="9382">MAQQQKKRRKRKVKKCKLCEMKVEYVDYKDLRLLNEFLTDKAKIIPKRVTGNCAKHQRMIKIAIKRARHMALLPFIKL</sequence>
<proteinExistence type="inferred from homology"/>